<proteinExistence type="evidence at transcript level"/>
<reference key="1">
    <citation type="journal article" date="2005" name="Genome Biol.">
        <title>Full-length cDNAs from chicken bursal lymphocytes to facilitate gene function analysis.</title>
        <authorList>
            <person name="Caldwell R.B."/>
            <person name="Kierzek A.M."/>
            <person name="Arakawa H."/>
            <person name="Bezzubov Y."/>
            <person name="Zaim J."/>
            <person name="Fiedler P."/>
            <person name="Kutter S."/>
            <person name="Blagodatski A."/>
            <person name="Kostovska D."/>
            <person name="Koter M."/>
            <person name="Plachy J."/>
            <person name="Carninci P."/>
            <person name="Hayashizaki Y."/>
            <person name="Buerstedde J.-M."/>
        </authorList>
    </citation>
    <scope>NUCLEOTIDE SEQUENCE [LARGE SCALE MRNA]</scope>
    <source>
        <strain>CB</strain>
        <tissue>Bursa of Fabricius</tissue>
    </source>
</reference>
<name>SPP2B_CHICK</name>
<organism>
    <name type="scientific">Gallus gallus</name>
    <name type="common">Chicken</name>
    <dbReference type="NCBI Taxonomy" id="9031"/>
    <lineage>
        <taxon>Eukaryota</taxon>
        <taxon>Metazoa</taxon>
        <taxon>Chordata</taxon>
        <taxon>Craniata</taxon>
        <taxon>Vertebrata</taxon>
        <taxon>Euteleostomi</taxon>
        <taxon>Archelosauria</taxon>
        <taxon>Archosauria</taxon>
        <taxon>Dinosauria</taxon>
        <taxon>Saurischia</taxon>
        <taxon>Theropoda</taxon>
        <taxon>Coelurosauria</taxon>
        <taxon>Aves</taxon>
        <taxon>Neognathae</taxon>
        <taxon>Galloanserae</taxon>
        <taxon>Galliformes</taxon>
        <taxon>Phasianidae</taxon>
        <taxon>Phasianinae</taxon>
        <taxon>Gallus</taxon>
    </lineage>
</organism>
<comment type="function">
    <text evidence="4">Intramembrane-cleaving aspartic protease (I-CLiP) that cleaves type II membrane signal peptides in the hydrophobic plane of the membrane.</text>
</comment>
<comment type="subcellular location">
    <subcellularLocation>
        <location evidence="3">Cell membrane</location>
        <topology evidence="7">Multi-pass membrane protein</topology>
    </subcellularLocation>
    <subcellularLocation>
        <location evidence="4">Golgi apparatus membrane</location>
        <topology evidence="4">Multi-pass membrane protein</topology>
    </subcellularLocation>
    <subcellularLocation>
        <location evidence="4">Lysosome membrane</location>
        <topology evidence="4">Multi-pass membrane protein</topology>
    </subcellularLocation>
    <subcellularLocation>
        <location evidence="4">Endosome membrane</location>
        <topology evidence="4">Multi-pass membrane protein</topology>
    </subcellularLocation>
    <subcellularLocation>
        <location evidence="4">Membrane</location>
        <topology evidence="4">Multi-pass membrane protein</topology>
        <orientation evidence="4">Lumenal side</orientation>
    </subcellularLocation>
</comment>
<comment type="domain">
    <text evidence="1">The PAL motif is required for normal active site conformation. The catalytic domains embedded in the membrane are in the opposite orientation to that of the presenilin protein family; therefore, it is predicted to cleave type II-oriented substrate peptides like the prototypic protease SPP.</text>
</comment>
<comment type="similarity">
    <text evidence="7">Belongs to the peptidase A22B family.</text>
</comment>
<evidence type="ECO:0000250" key="1">
    <source>
        <dbReference type="UniProtKB" id="P49768"/>
    </source>
</evidence>
<evidence type="ECO:0000250" key="2">
    <source>
        <dbReference type="UniProtKB" id="P49810"/>
    </source>
</evidence>
<evidence type="ECO:0000250" key="3">
    <source>
        <dbReference type="UniProtKB" id="Q3TD49"/>
    </source>
</evidence>
<evidence type="ECO:0000250" key="4">
    <source>
        <dbReference type="UniProtKB" id="Q8TCT7"/>
    </source>
</evidence>
<evidence type="ECO:0000255" key="5"/>
<evidence type="ECO:0000256" key="6">
    <source>
        <dbReference type="SAM" id="MobiDB-lite"/>
    </source>
</evidence>
<evidence type="ECO:0000305" key="7"/>
<gene>
    <name evidence="4" type="primary">SPPL2B</name>
    <name type="ORF">RCJMB04_29c5</name>
</gene>
<sequence>MAARWAQFLLFSLLSLPQVYCEYGMVHVLSEKGSSKGKDYCILFNSQWAHLPHDLGKASLLQLQDQTASVLCSPSDVPDGGFNNRIPMVMRGNCTFYEKVRLAQINGARGLLIVSRERLVPPGGNRSQYEEIDIPVALLSYSDMLDIVKSFGRSVKGAMYAPNEPVLDYNMVIIFVMAVGTVAIGGYWAGSRDVKERYMKHKRDDGAEKHEDETVDVTPIMICVFVVMCCSMLVLLYFFYDHLVYVIIGIFCLAASIGLYSCLSPFVRRFPLGKCRIPDNNLPYFHKRPQVRILLLAVFCISVSVVWGVFRNEDQWAWVLQDALGIAFCLYMLKTIRLPTFKGCTLLLLVLFVYDVFFVFITPFLTKTGESIMVEVAAGPSDSATHEKLPMVLKVPRLNSSPLALCDRPFSLLGFGDILVPGLLVAYCHRFDIQVQSSRVYFVACTIAYGIGLLVTFVALALMQMGQPALLYLVPCTLITSFSVALWRKELAMFWTGSGFAKDLPQPPLVIASVNCPQLPKDSNVPASQQETEEMANPTLHVKELHSPTLAAEEPADNDTKTEQSEVSIAQSEEAAGHNKDDLESKSLNLEQKQLE</sequence>
<protein>
    <recommendedName>
        <fullName evidence="4">Signal peptide peptidase-like 2B</fullName>
        <shortName evidence="4">SPP-like 2B</shortName>
        <shortName evidence="4">SPPL2b</shortName>
        <ecNumber>3.4.23.-</ecNumber>
    </recommendedName>
</protein>
<keyword id="KW-1003">Cell membrane</keyword>
<keyword id="KW-0967">Endosome</keyword>
<keyword id="KW-0325">Glycoprotein</keyword>
<keyword id="KW-0333">Golgi apparatus</keyword>
<keyword id="KW-0378">Hydrolase</keyword>
<keyword id="KW-0458">Lysosome</keyword>
<keyword id="KW-0472">Membrane</keyword>
<keyword id="KW-0645">Protease</keyword>
<keyword id="KW-1185">Reference proteome</keyword>
<keyword id="KW-0732">Signal</keyword>
<keyword id="KW-0812">Transmembrane</keyword>
<keyword id="KW-1133">Transmembrane helix</keyword>
<feature type="signal peptide" evidence="4">
    <location>
        <begin position="1"/>
        <end position="21"/>
    </location>
</feature>
<feature type="chain" id="PRO_0000236078" description="Signal peptide peptidase-like 2B">
    <location>
        <begin position="22"/>
        <end position="596"/>
    </location>
</feature>
<feature type="topological domain" description="Lumenal" evidence="4">
    <location>
        <begin position="22"/>
        <end position="170"/>
    </location>
</feature>
<feature type="transmembrane region" description="Helical" evidence="5">
    <location>
        <begin position="171"/>
        <end position="191"/>
    </location>
</feature>
<feature type="topological domain" description="Cytoplasmic" evidence="5">
    <location>
        <begin position="192"/>
        <end position="219"/>
    </location>
</feature>
<feature type="transmembrane region" description="Helical" evidence="5">
    <location>
        <begin position="220"/>
        <end position="240"/>
    </location>
</feature>
<feature type="topological domain" description="Lumenal" evidence="5">
    <location>
        <begin position="241"/>
        <end position="242"/>
    </location>
</feature>
<feature type="transmembrane region" description="Helical" evidence="5">
    <location>
        <begin position="243"/>
        <end position="263"/>
    </location>
</feature>
<feature type="topological domain" description="Cytoplasmic" evidence="5">
    <location>
        <begin position="264"/>
        <end position="289"/>
    </location>
</feature>
<feature type="transmembrane region" description="Helical" evidence="5">
    <location>
        <begin position="290"/>
        <end position="310"/>
    </location>
</feature>
<feature type="topological domain" description="Lumenal" evidence="5">
    <location>
        <begin position="311"/>
        <end position="315"/>
    </location>
</feature>
<feature type="transmembrane region" description="Helical" evidence="5">
    <location>
        <begin position="316"/>
        <end position="336"/>
    </location>
</feature>
<feature type="topological domain" description="Cytoplasmic" evidence="5">
    <location>
        <begin position="337"/>
        <end position="344"/>
    </location>
</feature>
<feature type="transmembrane region" description="Helical" evidence="5">
    <location>
        <begin position="345"/>
        <end position="365"/>
    </location>
</feature>
<feature type="topological domain" description="Lumenal" evidence="4">
    <location>
        <begin position="366"/>
        <end position="408"/>
    </location>
</feature>
<feature type="transmembrane region" description="Helical" evidence="5">
    <location>
        <begin position="409"/>
        <end position="429"/>
    </location>
</feature>
<feature type="topological domain" description="Cytoplasmic" evidence="5">
    <location>
        <begin position="430"/>
        <end position="441"/>
    </location>
</feature>
<feature type="transmembrane region" description="Helical" evidence="5">
    <location>
        <begin position="442"/>
        <end position="462"/>
    </location>
</feature>
<feature type="topological domain" description="Lumenal" evidence="5">
    <location>
        <begin position="463"/>
        <end position="466"/>
    </location>
</feature>
<feature type="transmembrane region" description="Helical" evidence="5">
    <location>
        <begin position="467"/>
        <end position="487"/>
    </location>
</feature>
<feature type="topological domain" description="Cytoplasmic" evidence="4">
    <location>
        <begin position="488"/>
        <end position="596"/>
    </location>
</feature>
<feature type="domain" description="PA">
    <location>
        <begin position="53"/>
        <end position="147"/>
    </location>
</feature>
<feature type="region of interest" description="Disordered" evidence="6">
    <location>
        <begin position="543"/>
        <end position="596"/>
    </location>
</feature>
<feature type="short sequence motif" description="PAL">
    <location>
        <begin position="468"/>
        <end position="470"/>
    </location>
</feature>
<feature type="compositionally biased region" description="Basic and acidic residues" evidence="6">
    <location>
        <begin position="575"/>
        <end position="585"/>
    </location>
</feature>
<feature type="compositionally biased region" description="Polar residues" evidence="6">
    <location>
        <begin position="586"/>
        <end position="596"/>
    </location>
</feature>
<feature type="active site" evidence="2">
    <location>
        <position position="355"/>
    </location>
</feature>
<feature type="active site" evidence="2">
    <location>
        <position position="417"/>
    </location>
</feature>
<feature type="glycosylation site" description="N-linked (GlcNAc...) asparagine" evidence="5">
    <location>
        <position position="93"/>
    </location>
</feature>
<accession>Q5F383</accession>
<dbReference type="EC" id="3.4.23.-"/>
<dbReference type="EMBL" id="AJ851767">
    <property type="protein sequence ID" value="CAH65401.1"/>
    <property type="molecule type" value="mRNA"/>
</dbReference>
<dbReference type="RefSeq" id="NP_001026104.1">
    <property type="nucleotide sequence ID" value="NM_001030933.1"/>
</dbReference>
<dbReference type="FunCoup" id="Q5F383">
    <property type="interactions" value="1043"/>
</dbReference>
<dbReference type="STRING" id="9031.ENSGALP00000000586"/>
<dbReference type="MEROPS" id="A22.004"/>
<dbReference type="GlyCosmos" id="Q5F383">
    <property type="glycosylation" value="1 site, No reported glycans"/>
</dbReference>
<dbReference type="GlyGen" id="Q5F383">
    <property type="glycosylation" value="1 site"/>
</dbReference>
<dbReference type="PaxDb" id="9031-ENSGALP00000000586"/>
<dbReference type="GeneID" id="420056"/>
<dbReference type="KEGG" id="gga:420056"/>
<dbReference type="CTD" id="162540"/>
<dbReference type="VEuPathDB" id="HostDB:geneid_420056"/>
<dbReference type="eggNOG" id="KOG2442">
    <property type="taxonomic scope" value="Eukaryota"/>
</dbReference>
<dbReference type="InParanoid" id="Q5F383"/>
<dbReference type="OrthoDB" id="29661at2759"/>
<dbReference type="PhylomeDB" id="Q5F383"/>
<dbReference type="PRO" id="PR:Q5F383"/>
<dbReference type="Proteomes" id="UP000000539">
    <property type="component" value="Unassembled WGS sequence"/>
</dbReference>
<dbReference type="GO" id="GO:0098554">
    <property type="term" value="C:cytoplasmic side of endoplasmic reticulum membrane"/>
    <property type="evidence" value="ECO:0000250"/>
    <property type="project" value="UniProtKB"/>
</dbReference>
<dbReference type="GO" id="GO:0010008">
    <property type="term" value="C:endosome membrane"/>
    <property type="evidence" value="ECO:0000250"/>
    <property type="project" value="UniProtKB"/>
</dbReference>
<dbReference type="GO" id="GO:0000139">
    <property type="term" value="C:Golgi membrane"/>
    <property type="evidence" value="ECO:0007669"/>
    <property type="project" value="UniProtKB-SubCell"/>
</dbReference>
<dbReference type="GO" id="GO:0030660">
    <property type="term" value="C:Golgi-associated vesicle membrane"/>
    <property type="evidence" value="ECO:0000250"/>
    <property type="project" value="UniProtKB"/>
</dbReference>
<dbReference type="GO" id="GO:0098553">
    <property type="term" value="C:lumenal side of endoplasmic reticulum membrane"/>
    <property type="evidence" value="ECO:0000250"/>
    <property type="project" value="UniProtKB"/>
</dbReference>
<dbReference type="GO" id="GO:0005765">
    <property type="term" value="C:lysosomal membrane"/>
    <property type="evidence" value="ECO:0000250"/>
    <property type="project" value="UniProtKB"/>
</dbReference>
<dbReference type="GO" id="GO:0005886">
    <property type="term" value="C:plasma membrane"/>
    <property type="evidence" value="ECO:0000250"/>
    <property type="project" value="UniProtKB"/>
</dbReference>
<dbReference type="GO" id="GO:0042500">
    <property type="term" value="F:aspartic endopeptidase activity, intramembrane cleaving"/>
    <property type="evidence" value="ECO:0000318"/>
    <property type="project" value="GO_Central"/>
</dbReference>
<dbReference type="GO" id="GO:0042803">
    <property type="term" value="F:protein homodimerization activity"/>
    <property type="evidence" value="ECO:0000250"/>
    <property type="project" value="UniProtKB"/>
</dbReference>
<dbReference type="GO" id="GO:0006509">
    <property type="term" value="P:membrane protein ectodomain proteolysis"/>
    <property type="evidence" value="ECO:0000250"/>
    <property type="project" value="UniProtKB"/>
</dbReference>
<dbReference type="GO" id="GO:0031293">
    <property type="term" value="P:membrane protein intracellular domain proteolysis"/>
    <property type="evidence" value="ECO:0000250"/>
    <property type="project" value="UniProtKB"/>
</dbReference>
<dbReference type="GO" id="GO:0033619">
    <property type="term" value="P:membrane protein proteolysis"/>
    <property type="evidence" value="ECO:0000318"/>
    <property type="project" value="GO_Central"/>
</dbReference>
<dbReference type="GO" id="GO:0050776">
    <property type="term" value="P:regulation of immune response"/>
    <property type="evidence" value="ECO:0000250"/>
    <property type="project" value="UniProtKB"/>
</dbReference>
<dbReference type="CDD" id="cd02129">
    <property type="entry name" value="PA_hSPPL_like"/>
    <property type="match status" value="1"/>
</dbReference>
<dbReference type="FunFam" id="3.50.30.30:FF:000006">
    <property type="entry name" value="Putative signal peptide peptidase-like 2B"/>
    <property type="match status" value="1"/>
</dbReference>
<dbReference type="Gene3D" id="3.50.30.30">
    <property type="match status" value="1"/>
</dbReference>
<dbReference type="InterPro" id="IPR046450">
    <property type="entry name" value="PA_dom_sf"/>
</dbReference>
<dbReference type="InterPro" id="IPR003137">
    <property type="entry name" value="PA_domain"/>
</dbReference>
<dbReference type="InterPro" id="IPR007369">
    <property type="entry name" value="Peptidase_A22B_SPP"/>
</dbReference>
<dbReference type="InterPro" id="IPR006639">
    <property type="entry name" value="Preselin/SPP"/>
</dbReference>
<dbReference type="PANTHER" id="PTHR12174">
    <property type="entry name" value="SIGNAL PEPTIDE PEPTIDASE"/>
    <property type="match status" value="1"/>
</dbReference>
<dbReference type="PANTHER" id="PTHR12174:SF39">
    <property type="entry name" value="SIGNAL PEPTIDE PEPTIDASE-LIKE 2B"/>
    <property type="match status" value="1"/>
</dbReference>
<dbReference type="Pfam" id="PF02225">
    <property type="entry name" value="PA"/>
    <property type="match status" value="1"/>
</dbReference>
<dbReference type="Pfam" id="PF04258">
    <property type="entry name" value="Peptidase_A22B"/>
    <property type="match status" value="1"/>
</dbReference>
<dbReference type="SMART" id="SM00730">
    <property type="entry name" value="PSN"/>
    <property type="match status" value="1"/>
</dbReference>
<dbReference type="SUPFAM" id="SSF52025">
    <property type="entry name" value="PA domain"/>
    <property type="match status" value="1"/>
</dbReference>